<feature type="chain" id="PRO_1000100931" description="ATP-dependent protease ATPase subunit HslU">
    <location>
        <begin position="1"/>
        <end position="440"/>
    </location>
</feature>
<feature type="binding site" evidence="1">
    <location>
        <position position="17"/>
    </location>
    <ligand>
        <name>ATP</name>
        <dbReference type="ChEBI" id="CHEBI:30616"/>
    </ligand>
</feature>
<feature type="binding site" evidence="1">
    <location>
        <begin position="59"/>
        <end position="64"/>
    </location>
    <ligand>
        <name>ATP</name>
        <dbReference type="ChEBI" id="CHEBI:30616"/>
    </ligand>
</feature>
<feature type="binding site" evidence="1">
    <location>
        <position position="253"/>
    </location>
    <ligand>
        <name>ATP</name>
        <dbReference type="ChEBI" id="CHEBI:30616"/>
    </ligand>
</feature>
<feature type="binding site" evidence="1">
    <location>
        <position position="318"/>
    </location>
    <ligand>
        <name>ATP</name>
        <dbReference type="ChEBI" id="CHEBI:30616"/>
    </ligand>
</feature>
<feature type="binding site" evidence="1">
    <location>
        <position position="390"/>
    </location>
    <ligand>
        <name>ATP</name>
        <dbReference type="ChEBI" id="CHEBI:30616"/>
    </ligand>
</feature>
<protein>
    <recommendedName>
        <fullName evidence="1">ATP-dependent protease ATPase subunit HslU</fullName>
    </recommendedName>
    <alternativeName>
        <fullName evidence="1">Unfoldase HslU</fullName>
    </alternativeName>
</protein>
<dbReference type="EMBL" id="CP000687">
    <property type="protein sequence ID" value="ABY70321.1"/>
    <property type="molecule type" value="Genomic_DNA"/>
</dbReference>
<dbReference type="RefSeq" id="WP_012263375.1">
    <property type="nucleotide sequence ID" value="NC_010278.1"/>
</dbReference>
<dbReference type="SMR" id="B0BSG4"/>
<dbReference type="KEGG" id="apj:APJL_1771"/>
<dbReference type="HOGENOM" id="CLU_033123_0_0_6"/>
<dbReference type="Proteomes" id="UP000008547">
    <property type="component" value="Chromosome"/>
</dbReference>
<dbReference type="GO" id="GO:0009376">
    <property type="term" value="C:HslUV protease complex"/>
    <property type="evidence" value="ECO:0007669"/>
    <property type="project" value="UniProtKB-UniRule"/>
</dbReference>
<dbReference type="GO" id="GO:0005524">
    <property type="term" value="F:ATP binding"/>
    <property type="evidence" value="ECO:0007669"/>
    <property type="project" value="UniProtKB-UniRule"/>
</dbReference>
<dbReference type="GO" id="GO:0016887">
    <property type="term" value="F:ATP hydrolysis activity"/>
    <property type="evidence" value="ECO:0007669"/>
    <property type="project" value="InterPro"/>
</dbReference>
<dbReference type="GO" id="GO:0008233">
    <property type="term" value="F:peptidase activity"/>
    <property type="evidence" value="ECO:0007669"/>
    <property type="project" value="InterPro"/>
</dbReference>
<dbReference type="GO" id="GO:0036402">
    <property type="term" value="F:proteasome-activating activity"/>
    <property type="evidence" value="ECO:0007669"/>
    <property type="project" value="UniProtKB-UniRule"/>
</dbReference>
<dbReference type="GO" id="GO:0043335">
    <property type="term" value="P:protein unfolding"/>
    <property type="evidence" value="ECO:0007669"/>
    <property type="project" value="UniProtKB-UniRule"/>
</dbReference>
<dbReference type="GO" id="GO:0051603">
    <property type="term" value="P:proteolysis involved in protein catabolic process"/>
    <property type="evidence" value="ECO:0007669"/>
    <property type="project" value="TreeGrafter"/>
</dbReference>
<dbReference type="CDD" id="cd19498">
    <property type="entry name" value="RecA-like_HslU"/>
    <property type="match status" value="1"/>
</dbReference>
<dbReference type="FunFam" id="1.10.8.10:FF:000028">
    <property type="entry name" value="ATP-dependent protease ATPase subunit HslU"/>
    <property type="match status" value="2"/>
</dbReference>
<dbReference type="FunFam" id="1.10.8.60:FF:000027">
    <property type="entry name" value="ATP-dependent protease ATPase subunit HslU"/>
    <property type="match status" value="1"/>
</dbReference>
<dbReference type="FunFam" id="3.40.50.300:FF:000213">
    <property type="entry name" value="ATP-dependent protease ATPase subunit HslU"/>
    <property type="match status" value="1"/>
</dbReference>
<dbReference type="FunFam" id="3.40.50.300:FF:000220">
    <property type="entry name" value="ATP-dependent protease ATPase subunit HslU"/>
    <property type="match status" value="1"/>
</dbReference>
<dbReference type="Gene3D" id="1.10.8.60">
    <property type="match status" value="1"/>
</dbReference>
<dbReference type="Gene3D" id="1.10.8.10">
    <property type="entry name" value="DNA helicase RuvA subunit, C-terminal domain"/>
    <property type="match status" value="1"/>
</dbReference>
<dbReference type="Gene3D" id="3.40.50.300">
    <property type="entry name" value="P-loop containing nucleotide triphosphate hydrolases"/>
    <property type="match status" value="2"/>
</dbReference>
<dbReference type="HAMAP" id="MF_00249">
    <property type="entry name" value="HslU"/>
    <property type="match status" value="1"/>
</dbReference>
<dbReference type="InterPro" id="IPR003593">
    <property type="entry name" value="AAA+_ATPase"/>
</dbReference>
<dbReference type="InterPro" id="IPR050052">
    <property type="entry name" value="ATP-dep_Clp_protease_ClpX"/>
</dbReference>
<dbReference type="InterPro" id="IPR003959">
    <property type="entry name" value="ATPase_AAA_core"/>
</dbReference>
<dbReference type="InterPro" id="IPR019489">
    <property type="entry name" value="Clp_ATPase_C"/>
</dbReference>
<dbReference type="InterPro" id="IPR004491">
    <property type="entry name" value="HslU"/>
</dbReference>
<dbReference type="InterPro" id="IPR027417">
    <property type="entry name" value="P-loop_NTPase"/>
</dbReference>
<dbReference type="NCBIfam" id="TIGR00390">
    <property type="entry name" value="hslU"/>
    <property type="match status" value="1"/>
</dbReference>
<dbReference type="NCBIfam" id="NF003544">
    <property type="entry name" value="PRK05201.1"/>
    <property type="match status" value="1"/>
</dbReference>
<dbReference type="PANTHER" id="PTHR48102">
    <property type="entry name" value="ATP-DEPENDENT CLP PROTEASE ATP-BINDING SUBUNIT CLPX-LIKE, MITOCHONDRIAL-RELATED"/>
    <property type="match status" value="1"/>
</dbReference>
<dbReference type="PANTHER" id="PTHR48102:SF3">
    <property type="entry name" value="ATP-DEPENDENT PROTEASE ATPASE SUBUNIT HSLU"/>
    <property type="match status" value="1"/>
</dbReference>
<dbReference type="Pfam" id="PF00004">
    <property type="entry name" value="AAA"/>
    <property type="match status" value="1"/>
</dbReference>
<dbReference type="Pfam" id="PF07724">
    <property type="entry name" value="AAA_2"/>
    <property type="match status" value="1"/>
</dbReference>
<dbReference type="SMART" id="SM00382">
    <property type="entry name" value="AAA"/>
    <property type="match status" value="1"/>
</dbReference>
<dbReference type="SMART" id="SM01086">
    <property type="entry name" value="ClpB_D2-small"/>
    <property type="match status" value="1"/>
</dbReference>
<dbReference type="SUPFAM" id="SSF52540">
    <property type="entry name" value="P-loop containing nucleoside triphosphate hydrolases"/>
    <property type="match status" value="1"/>
</dbReference>
<accession>B0BSG4</accession>
<organism>
    <name type="scientific">Actinobacillus pleuropneumoniae serotype 3 (strain JL03)</name>
    <dbReference type="NCBI Taxonomy" id="434271"/>
    <lineage>
        <taxon>Bacteria</taxon>
        <taxon>Pseudomonadati</taxon>
        <taxon>Pseudomonadota</taxon>
        <taxon>Gammaproteobacteria</taxon>
        <taxon>Pasteurellales</taxon>
        <taxon>Pasteurellaceae</taxon>
        <taxon>Actinobacillus</taxon>
    </lineage>
</organism>
<sequence>MSMTPREIVSELDAHIIGQNEAKRAVAIALRNRWRRMQLPEDLRQEVTPKNILMIGPTGVGKTEIARRLAKLANAPFIKVEATKFTEVGYVGKEVDSIIKDLTDVAVKLVKSQAVEKNRMRAQDAAEDRILDVLLPPAKDQWGNVQESDNSSTRQVFRKKLREGQLDDKEIEIDVAAQVSVEIMTPPGMEEMTSQLQSLFEGMSPNKTKKRKMKIKDALKVMVDEEAAKLVNPEELKQQAIEAVEQHGIVFIDEIDKICKKGEYSGGDVSREGVQRDLLPIIEGSTVNTKHGMVKTDHILFICSGAFQVARPSDLLPELQGRLPIRVELKSLTKEDFERILTEPNASLTLQYRELMKTEGVEIEFTKDGISKIAESAFRVNEKTENIGARRLHTVLERLMDGISFDASERSGEKIVIDEKYVQDALNDVVENEDLSRFIL</sequence>
<proteinExistence type="inferred from homology"/>
<gene>
    <name evidence="1" type="primary">hslU</name>
    <name type="ordered locus">APJL_1771</name>
</gene>
<keyword id="KW-0067">ATP-binding</keyword>
<keyword id="KW-0143">Chaperone</keyword>
<keyword id="KW-0963">Cytoplasm</keyword>
<keyword id="KW-0547">Nucleotide-binding</keyword>
<comment type="function">
    <text evidence="1">ATPase subunit of a proteasome-like degradation complex; this subunit has chaperone activity. The binding of ATP and its subsequent hydrolysis by HslU are essential for unfolding of protein substrates subsequently hydrolyzed by HslV. HslU recognizes the N-terminal part of its protein substrates and unfolds these before they are guided to HslV for hydrolysis.</text>
</comment>
<comment type="subunit">
    <text evidence="1">A double ring-shaped homohexamer of HslV is capped on each side by a ring-shaped HslU homohexamer. The assembly of the HslU/HslV complex is dependent on binding of ATP.</text>
</comment>
<comment type="subcellular location">
    <subcellularLocation>
        <location evidence="1">Cytoplasm</location>
    </subcellularLocation>
</comment>
<comment type="similarity">
    <text evidence="1">Belongs to the ClpX chaperone family. HslU subfamily.</text>
</comment>
<reference key="1">
    <citation type="journal article" date="2008" name="PLoS ONE">
        <title>Genome biology of Actinobacillus pleuropneumoniae JL03, an isolate of serotype 3 prevalent in China.</title>
        <authorList>
            <person name="Xu Z."/>
            <person name="Zhou Y."/>
            <person name="Li L."/>
            <person name="Zhou R."/>
            <person name="Xiao S."/>
            <person name="Wan Y."/>
            <person name="Zhang S."/>
            <person name="Wang K."/>
            <person name="Li W."/>
            <person name="Li L."/>
            <person name="Jin H."/>
            <person name="Kang M."/>
            <person name="Dalai B."/>
            <person name="Li T."/>
            <person name="Liu L."/>
            <person name="Cheng Y."/>
            <person name="Zhang L."/>
            <person name="Xu T."/>
            <person name="Zheng H."/>
            <person name="Pu S."/>
            <person name="Wang B."/>
            <person name="Gu W."/>
            <person name="Zhang X.L."/>
            <person name="Zhu G.-F."/>
            <person name="Wang S."/>
            <person name="Zhao G.-P."/>
            <person name="Chen H."/>
        </authorList>
    </citation>
    <scope>NUCLEOTIDE SEQUENCE [LARGE SCALE GENOMIC DNA]</scope>
    <source>
        <strain>JL03</strain>
    </source>
</reference>
<name>HSLU_ACTPJ</name>
<evidence type="ECO:0000255" key="1">
    <source>
        <dbReference type="HAMAP-Rule" id="MF_00249"/>
    </source>
</evidence>